<protein>
    <recommendedName>
        <fullName evidence="1">DNA replication terminus site-binding protein</fullName>
        <shortName evidence="1">Ter-binding protein</shortName>
    </recommendedName>
</protein>
<comment type="function">
    <text evidence="1">Trans-acting protein required for termination of DNA replication. Binds to DNA replication terminator sequences (terA to terF) to prevent the passage of replication forks. The termination efficiency will be affected by the affinity of this protein for the terminator sequence.</text>
</comment>
<comment type="subcellular location">
    <subcellularLocation>
        <location evidence="1">Cytoplasm</location>
    </subcellularLocation>
</comment>
<comment type="similarity">
    <text evidence="1">Belongs to the Tus family.</text>
</comment>
<keyword id="KW-0963">Cytoplasm</keyword>
<keyword id="KW-0235">DNA replication</keyword>
<keyword id="KW-0238">DNA-binding</keyword>
<proteinExistence type="inferred from homology"/>
<gene>
    <name evidence="1" type="primary">tus</name>
    <name type="ordered locus">BWG_1425</name>
</gene>
<reference key="1">
    <citation type="journal article" date="2009" name="J. Bacteriol.">
        <title>Genomic sequencing reveals regulatory mutations and recombinational events in the widely used MC4100 lineage of Escherichia coli K-12.</title>
        <authorList>
            <person name="Ferenci T."/>
            <person name="Zhou Z."/>
            <person name="Betteridge T."/>
            <person name="Ren Y."/>
            <person name="Liu Y."/>
            <person name="Feng L."/>
            <person name="Reeves P.R."/>
            <person name="Wang L."/>
        </authorList>
    </citation>
    <scope>NUCLEOTIDE SEQUENCE [LARGE SCALE GENOMIC DNA]</scope>
    <source>
        <strain>K12 / MC4100 / BW2952</strain>
    </source>
</reference>
<dbReference type="EMBL" id="CP001396">
    <property type="protein sequence ID" value="ACR63503.1"/>
    <property type="molecule type" value="Genomic_DNA"/>
</dbReference>
<dbReference type="RefSeq" id="WP_000135181.1">
    <property type="nucleotide sequence ID" value="NC_012759.1"/>
</dbReference>
<dbReference type="SMR" id="C4ZY73"/>
<dbReference type="KEGG" id="ebw:BWG_1425"/>
<dbReference type="HOGENOM" id="CLU_078181_0_0_6"/>
<dbReference type="GO" id="GO:0005737">
    <property type="term" value="C:cytoplasm"/>
    <property type="evidence" value="ECO:0007669"/>
    <property type="project" value="UniProtKB-SubCell"/>
</dbReference>
<dbReference type="GO" id="GO:0003677">
    <property type="term" value="F:DNA binding"/>
    <property type="evidence" value="ECO:0007669"/>
    <property type="project" value="UniProtKB-UniRule"/>
</dbReference>
<dbReference type="GO" id="GO:0006274">
    <property type="term" value="P:DNA replication termination"/>
    <property type="evidence" value="ECO:0007669"/>
    <property type="project" value="UniProtKB-UniRule"/>
</dbReference>
<dbReference type="Gene3D" id="3.30.54.10">
    <property type="match status" value="1"/>
</dbReference>
<dbReference type="Gene3D" id="3.50.14.10">
    <property type="entry name" value="Replication terminator Tus, domain 1 superfamily/Replication terminator Tus"/>
    <property type="match status" value="1"/>
</dbReference>
<dbReference type="HAMAP" id="MF_00483">
    <property type="entry name" value="Rep_term_Tus"/>
    <property type="match status" value="1"/>
</dbReference>
<dbReference type="InterPro" id="IPR008865">
    <property type="entry name" value="DNA_replication_term_site-bd"/>
</dbReference>
<dbReference type="InterPro" id="IPR036381">
    <property type="entry name" value="Tus_dom1"/>
</dbReference>
<dbReference type="InterPro" id="IPR036384">
    <property type="entry name" value="Tus_sf"/>
</dbReference>
<dbReference type="NCBIfam" id="TIGR02648">
    <property type="entry name" value="rep_term_tus"/>
    <property type="match status" value="1"/>
</dbReference>
<dbReference type="Pfam" id="PF05472">
    <property type="entry name" value="Ter"/>
    <property type="match status" value="1"/>
</dbReference>
<dbReference type="SUPFAM" id="SSF56596">
    <property type="entry name" value="Replication terminator protein (Tus)"/>
    <property type="match status" value="1"/>
</dbReference>
<evidence type="ECO:0000255" key="1">
    <source>
        <dbReference type="HAMAP-Rule" id="MF_00483"/>
    </source>
</evidence>
<organism>
    <name type="scientific">Escherichia coli (strain K12 / MC4100 / BW2952)</name>
    <dbReference type="NCBI Taxonomy" id="595496"/>
    <lineage>
        <taxon>Bacteria</taxon>
        <taxon>Pseudomonadati</taxon>
        <taxon>Pseudomonadota</taxon>
        <taxon>Gammaproteobacteria</taxon>
        <taxon>Enterobacterales</taxon>
        <taxon>Enterobacteriaceae</taxon>
        <taxon>Escherichia</taxon>
    </lineage>
</organism>
<name>TUS_ECOBW</name>
<sequence length="309" mass="35783">MARYDLVDRLNTTFRQMEQELAIFAAHLEQHKLLVARVFSLPEVKKEDEHNPLNRIEVKQHLGNDAQSLALRHFRHLFIQQQSENRSSKAAVRLPGVLCYQVDNLSQAALVSHIQHINKLKTTFEHIVTVESELPTAARFEWVHRHLPGLITLNAYRTLTVLHDPATLRFGWANKHIIKNLHRDEVLAQLEKSLKSPRSVAPWTREEWQRKLEREYQDIAALPQNAKLKIKRPVKVQPIARVWYKGDQKQVQHACPTPLIALINRDNGAGVPDVGELLNYDADNVQHRYKPQAQPLRLIIPRLHLYVAD</sequence>
<feature type="chain" id="PRO_1000206423" description="DNA replication terminus site-binding protein">
    <location>
        <begin position="1"/>
        <end position="309"/>
    </location>
</feature>
<accession>C4ZY73</accession>